<gene>
    <name evidence="1" type="primary">gatE</name>
    <name type="ordered locus">MmarC7_0512</name>
</gene>
<evidence type="ECO:0000255" key="1">
    <source>
        <dbReference type="HAMAP-Rule" id="MF_00588"/>
    </source>
</evidence>
<keyword id="KW-0067">ATP-binding</keyword>
<keyword id="KW-0436">Ligase</keyword>
<keyword id="KW-0547">Nucleotide-binding</keyword>
<keyword id="KW-0648">Protein biosynthesis</keyword>
<comment type="function">
    <text evidence="1">Allows the formation of correctly charged Gln-tRNA(Gln) through the transamidation of misacylated Glu-tRNA(Gln) in organisms which lack glutaminyl-tRNA synthetase. The reaction takes place in the presence of glutamine and ATP through an activated gamma-phospho-Glu-tRNA(Gln). The GatDE system is specific for glutamate and does not act on aspartate.</text>
</comment>
<comment type="catalytic activity">
    <reaction evidence="1">
        <text>L-glutamyl-tRNA(Gln) + L-glutamine + ATP + H2O = L-glutaminyl-tRNA(Gln) + L-glutamate + ADP + phosphate + H(+)</text>
        <dbReference type="Rhea" id="RHEA:17521"/>
        <dbReference type="Rhea" id="RHEA-COMP:9681"/>
        <dbReference type="Rhea" id="RHEA-COMP:9684"/>
        <dbReference type="ChEBI" id="CHEBI:15377"/>
        <dbReference type="ChEBI" id="CHEBI:15378"/>
        <dbReference type="ChEBI" id="CHEBI:29985"/>
        <dbReference type="ChEBI" id="CHEBI:30616"/>
        <dbReference type="ChEBI" id="CHEBI:43474"/>
        <dbReference type="ChEBI" id="CHEBI:58359"/>
        <dbReference type="ChEBI" id="CHEBI:78520"/>
        <dbReference type="ChEBI" id="CHEBI:78521"/>
        <dbReference type="ChEBI" id="CHEBI:456216"/>
    </reaction>
</comment>
<comment type="subunit">
    <text evidence="1">Heterodimer of GatD and GatE.</text>
</comment>
<comment type="similarity">
    <text evidence="1">Belongs to the GatB/GatE family. GatE subfamily.</text>
</comment>
<reference key="1">
    <citation type="submission" date="2007-06" db="EMBL/GenBank/DDBJ databases">
        <title>Complete sequence of Methanococcus maripaludis C7.</title>
        <authorList>
            <consortium name="US DOE Joint Genome Institute"/>
            <person name="Copeland A."/>
            <person name="Lucas S."/>
            <person name="Lapidus A."/>
            <person name="Barry K."/>
            <person name="Glavina del Rio T."/>
            <person name="Dalin E."/>
            <person name="Tice H."/>
            <person name="Pitluck S."/>
            <person name="Clum A."/>
            <person name="Schmutz J."/>
            <person name="Larimer F."/>
            <person name="Land M."/>
            <person name="Hauser L."/>
            <person name="Kyrpides N."/>
            <person name="Anderson I."/>
            <person name="Sieprawska-Lupa M."/>
            <person name="Whitman W.B."/>
            <person name="Richardson P."/>
        </authorList>
    </citation>
    <scope>NUCLEOTIDE SEQUENCE [LARGE SCALE GENOMIC DNA]</scope>
    <source>
        <strain>C7 / ATCC BAA-1331</strain>
    </source>
</reference>
<accession>A6VGK4</accession>
<sequence>MDYDYEKLGLKVGLEIHQQLNTKRKLFCNCPTKIRDDEPHGEIERVLRPSQSEMGHVDKAALLESKKEKKFIYQYYNDTTCLVELDDEPPHDVAPEAVDTALEVSTLMNMKMADEIQVMRKMVIDGSNTSGFQRTMFVSQEGFIETDYGNIGVTSICLEEDACKKIEDGKDYTKYCVDRLGIPLLEITTEPDITSPKMGKEAARRIGTILRATGKVKRGLGTIRQDVNISIKGGARIEVKGVQNLDLIEKIIENEVTRQISLNEIKEELLKRNAEVIDEIKDITELLKDTESKVLKSALKNKGVIKAILLNGFSGMIGREVQPGRRLGTEFSDRGKVLGGVGGLFHTDELPKYGITEEEVIKLKEFMSCGENDAVILVADKKNKVERALNAVIERAKESMIGIPEETRKALDDGNTSYLRPLPGAARMYPETDVPTITITEEKLEMVRNNLPEMPEEKLVRFVNEYELNEDLAKQMVMSYHVDLFESLAKKYSKIKPTLIATTLEATLKEIKREGLETEVLTEEHLDEVFKGLSEDKMSKEAVPDVIKGFIENPAKNLDEVLEIKGMSSMSVEEVESIIEDIINQNISTVNEKGMGAMGLLMGRCMAQLRGNADGKLINTTLQKKLKEKVQ</sequence>
<dbReference type="EC" id="6.3.5.-" evidence="1"/>
<dbReference type="EMBL" id="CP000745">
    <property type="protein sequence ID" value="ABR65580.1"/>
    <property type="molecule type" value="Genomic_DNA"/>
</dbReference>
<dbReference type="SMR" id="A6VGK4"/>
<dbReference type="STRING" id="426368.MmarC7_0512"/>
<dbReference type="KEGG" id="mmz:MmarC7_0512"/>
<dbReference type="eggNOG" id="arCOG01719">
    <property type="taxonomic scope" value="Archaea"/>
</dbReference>
<dbReference type="HOGENOM" id="CLU_030702_0_0_2"/>
<dbReference type="OrthoDB" id="7316at2157"/>
<dbReference type="GO" id="GO:0005737">
    <property type="term" value="C:cytoplasm"/>
    <property type="evidence" value="ECO:0007669"/>
    <property type="project" value="InterPro"/>
</dbReference>
<dbReference type="GO" id="GO:0004812">
    <property type="term" value="F:aminoacyl-tRNA ligase activity"/>
    <property type="evidence" value="ECO:0007669"/>
    <property type="project" value="InterPro"/>
</dbReference>
<dbReference type="GO" id="GO:0005524">
    <property type="term" value="F:ATP binding"/>
    <property type="evidence" value="ECO:0007669"/>
    <property type="project" value="UniProtKB-KW"/>
</dbReference>
<dbReference type="GO" id="GO:0050567">
    <property type="term" value="F:glutaminyl-tRNA synthase (glutamine-hydrolyzing) activity"/>
    <property type="evidence" value="ECO:0007669"/>
    <property type="project" value="UniProtKB-UniRule"/>
</dbReference>
<dbReference type="GO" id="GO:0070681">
    <property type="term" value="P:glutaminyl-tRNAGln biosynthesis via transamidation"/>
    <property type="evidence" value="ECO:0007669"/>
    <property type="project" value="TreeGrafter"/>
</dbReference>
<dbReference type="GO" id="GO:0006412">
    <property type="term" value="P:translation"/>
    <property type="evidence" value="ECO:0007669"/>
    <property type="project" value="UniProtKB-UniRule"/>
</dbReference>
<dbReference type="FunFam" id="1.10.10.410:FF:000003">
    <property type="entry name" value="Glutamyl-tRNA(Gln) amidotransferase subunit E"/>
    <property type="match status" value="1"/>
</dbReference>
<dbReference type="Gene3D" id="1.10.10.410">
    <property type="match status" value="1"/>
</dbReference>
<dbReference type="Gene3D" id="3.30.1360.30">
    <property type="entry name" value="GAD-like domain"/>
    <property type="match status" value="1"/>
</dbReference>
<dbReference type="Gene3D" id="1.10.150.380">
    <property type="entry name" value="GatB domain, N-terminal subdomain"/>
    <property type="match status" value="1"/>
</dbReference>
<dbReference type="HAMAP" id="MF_00588">
    <property type="entry name" value="GatE"/>
    <property type="match status" value="1"/>
</dbReference>
<dbReference type="InterPro" id="IPR017959">
    <property type="entry name" value="Asn/Gln-tRNA_amidoTrfase_suB/E"/>
</dbReference>
<dbReference type="InterPro" id="IPR006075">
    <property type="entry name" value="Asn/Gln-tRNA_Trfase_suB/E_cat"/>
</dbReference>
<dbReference type="InterPro" id="IPR018027">
    <property type="entry name" value="Asn/Gln_amidotransferase"/>
</dbReference>
<dbReference type="InterPro" id="IPR003789">
    <property type="entry name" value="Asn/Gln_tRNA_amidoTrase-B-like"/>
</dbReference>
<dbReference type="InterPro" id="IPR004115">
    <property type="entry name" value="GAD-like_sf"/>
</dbReference>
<dbReference type="InterPro" id="IPR029351">
    <property type="entry name" value="GAD_dom"/>
</dbReference>
<dbReference type="InterPro" id="IPR042114">
    <property type="entry name" value="GatB_C_1"/>
</dbReference>
<dbReference type="InterPro" id="IPR023168">
    <property type="entry name" value="GatB_Yqey_C_2"/>
</dbReference>
<dbReference type="InterPro" id="IPR004414">
    <property type="entry name" value="GatE"/>
</dbReference>
<dbReference type="InterPro" id="IPR017958">
    <property type="entry name" value="Gln-tRNA_amidoTrfase_suB_CS"/>
</dbReference>
<dbReference type="InterPro" id="IPR014746">
    <property type="entry name" value="Gln_synth/guanido_kin_cat_dom"/>
</dbReference>
<dbReference type="NCBIfam" id="TIGR00134">
    <property type="entry name" value="gatE_arch"/>
    <property type="match status" value="1"/>
</dbReference>
<dbReference type="NCBIfam" id="NF003107">
    <property type="entry name" value="PRK04028.1"/>
    <property type="match status" value="1"/>
</dbReference>
<dbReference type="PANTHER" id="PTHR11659">
    <property type="entry name" value="GLUTAMYL-TRNA GLN AMIDOTRANSFERASE SUBUNIT B MITOCHONDRIAL AND PROKARYOTIC PET112-RELATED"/>
    <property type="match status" value="1"/>
</dbReference>
<dbReference type="PANTHER" id="PTHR11659:SF2">
    <property type="entry name" value="GLUTAMYL-TRNA(GLN) AMIDOTRANSFERASE SUBUNIT E"/>
    <property type="match status" value="1"/>
</dbReference>
<dbReference type="Pfam" id="PF02938">
    <property type="entry name" value="GAD"/>
    <property type="match status" value="1"/>
</dbReference>
<dbReference type="Pfam" id="PF02934">
    <property type="entry name" value="GatB_N"/>
    <property type="match status" value="1"/>
</dbReference>
<dbReference type="Pfam" id="PF02637">
    <property type="entry name" value="GatB_Yqey"/>
    <property type="match status" value="1"/>
</dbReference>
<dbReference type="SMART" id="SM00845">
    <property type="entry name" value="GatB_Yqey"/>
    <property type="match status" value="1"/>
</dbReference>
<dbReference type="SUPFAM" id="SSF55261">
    <property type="entry name" value="GAD domain-like"/>
    <property type="match status" value="1"/>
</dbReference>
<dbReference type="SUPFAM" id="SSF89095">
    <property type="entry name" value="GatB/YqeY motif"/>
    <property type="match status" value="1"/>
</dbReference>
<dbReference type="SUPFAM" id="SSF55931">
    <property type="entry name" value="Glutamine synthetase/guanido kinase"/>
    <property type="match status" value="1"/>
</dbReference>
<dbReference type="PROSITE" id="PS01234">
    <property type="entry name" value="GATB"/>
    <property type="match status" value="1"/>
</dbReference>
<feature type="chain" id="PRO_1000025479" description="Glutamyl-tRNA(Gln) amidotransferase subunit E">
    <location>
        <begin position="1"/>
        <end position="631"/>
    </location>
</feature>
<organism>
    <name type="scientific">Methanococcus maripaludis (strain C7 / ATCC BAA-1331)</name>
    <dbReference type="NCBI Taxonomy" id="426368"/>
    <lineage>
        <taxon>Archaea</taxon>
        <taxon>Methanobacteriati</taxon>
        <taxon>Methanobacteriota</taxon>
        <taxon>Methanomada group</taxon>
        <taxon>Methanococci</taxon>
        <taxon>Methanococcales</taxon>
        <taxon>Methanococcaceae</taxon>
        <taxon>Methanococcus</taxon>
    </lineage>
</organism>
<name>GATE_METM7</name>
<protein>
    <recommendedName>
        <fullName evidence="1">Glutamyl-tRNA(Gln) amidotransferase subunit E</fullName>
        <shortName evidence="1">Glu-ADT subunit E</shortName>
        <ecNumber evidence="1">6.3.5.-</ecNumber>
    </recommendedName>
</protein>
<proteinExistence type="inferred from homology"/>